<evidence type="ECO:0000250" key="1"/>
<evidence type="ECO:0000256" key="2">
    <source>
        <dbReference type="SAM" id="MobiDB-lite"/>
    </source>
</evidence>
<evidence type="ECO:0000269" key="3">
    <source>
    </source>
</evidence>
<evidence type="ECO:0000269" key="4">
    <source>
    </source>
</evidence>
<evidence type="ECO:0000269" key="5">
    <source>
    </source>
</evidence>
<evidence type="ECO:0000269" key="6">
    <source>
    </source>
</evidence>
<evidence type="ECO:0000269" key="7">
    <source>
    </source>
</evidence>
<evidence type="ECO:0000269" key="8">
    <source>
    </source>
</evidence>
<evidence type="ECO:0000269" key="9">
    <source>
    </source>
</evidence>
<evidence type="ECO:0000269" key="10">
    <source>
    </source>
</evidence>
<evidence type="ECO:0000305" key="11"/>
<protein>
    <recommendedName>
        <fullName>Transcription repressor KAN1</fullName>
    </recommendedName>
    <alternativeName>
        <fullName>Protein KANADI 1</fullName>
    </alternativeName>
</protein>
<keyword id="KW-0217">Developmental protein</keyword>
<keyword id="KW-0221">Differentiation</keyword>
<keyword id="KW-0238">DNA-binding</keyword>
<keyword id="KW-0539">Nucleus</keyword>
<keyword id="KW-1185">Reference proteome</keyword>
<keyword id="KW-0678">Repressor</keyword>
<keyword id="KW-0804">Transcription</keyword>
<keyword id="KW-0805">Transcription regulation</keyword>
<accession>Q93WJ9</accession>
<accession>Q94C09</accession>
<accession>Q9FFC8</accession>
<proteinExistence type="evidence at protein level"/>
<gene>
    <name type="primary">KAN1</name>
    <name type="synonym">KAN</name>
    <name type="ordered locus">At5g16560</name>
    <name type="ORF">MQK4.31</name>
</gene>
<dbReference type="EMBL" id="AY030192">
    <property type="protein sequence ID" value="AAK59989.1"/>
    <property type="molecule type" value="mRNA"/>
</dbReference>
<dbReference type="EMBL" id="AY037864">
    <property type="protein sequence ID" value="AAK59990.1"/>
    <property type="molecule type" value="mRNA"/>
</dbReference>
<dbReference type="EMBL" id="AY048688">
    <property type="protein sequence ID" value="AAL05436.1"/>
    <property type="molecule type" value="mRNA"/>
</dbReference>
<dbReference type="EMBL" id="AB005242">
    <property type="protein sequence ID" value="BAB09625.1"/>
    <property type="status" value="ALT_SEQ"/>
    <property type="molecule type" value="Genomic_DNA"/>
</dbReference>
<dbReference type="EMBL" id="CP002688">
    <property type="protein sequence ID" value="AED92310.1"/>
    <property type="molecule type" value="Genomic_DNA"/>
</dbReference>
<dbReference type="EMBL" id="BT026436">
    <property type="protein sequence ID" value="ABH04543.1"/>
    <property type="molecule type" value="mRNA"/>
</dbReference>
<dbReference type="RefSeq" id="NP_568334.1">
    <property type="nucleotide sequence ID" value="NM_121662.3"/>
</dbReference>
<dbReference type="SMR" id="Q93WJ9"/>
<dbReference type="BioGRID" id="16794">
    <property type="interactions" value="43"/>
</dbReference>
<dbReference type="FunCoup" id="Q93WJ9">
    <property type="interactions" value="420"/>
</dbReference>
<dbReference type="IntAct" id="Q93WJ9">
    <property type="interactions" value="46"/>
</dbReference>
<dbReference type="STRING" id="3702.Q93WJ9"/>
<dbReference type="iPTMnet" id="Q93WJ9"/>
<dbReference type="PaxDb" id="3702-AT5G16560.1"/>
<dbReference type="ProteomicsDB" id="250613"/>
<dbReference type="EnsemblPlants" id="AT5G16560.1">
    <property type="protein sequence ID" value="AT5G16560.1"/>
    <property type="gene ID" value="AT5G16560"/>
</dbReference>
<dbReference type="GeneID" id="831518"/>
<dbReference type="Gramene" id="AT5G16560.1">
    <property type="protein sequence ID" value="AT5G16560.1"/>
    <property type="gene ID" value="AT5G16560"/>
</dbReference>
<dbReference type="KEGG" id="ath:AT5G16560"/>
<dbReference type="Araport" id="AT5G16560"/>
<dbReference type="TAIR" id="AT5G16560">
    <property type="gene designation" value="KAN"/>
</dbReference>
<dbReference type="eggNOG" id="ENOG502QQZR">
    <property type="taxonomic scope" value="Eukaryota"/>
</dbReference>
<dbReference type="HOGENOM" id="CLU_047766_1_1_1"/>
<dbReference type="InParanoid" id="Q93WJ9"/>
<dbReference type="OMA" id="NDQAKRC"/>
<dbReference type="OrthoDB" id="551907at2759"/>
<dbReference type="PhylomeDB" id="Q93WJ9"/>
<dbReference type="PRO" id="PR:Q93WJ9"/>
<dbReference type="Proteomes" id="UP000006548">
    <property type="component" value="Chromosome 5"/>
</dbReference>
<dbReference type="ExpressionAtlas" id="Q93WJ9">
    <property type="expression patterns" value="baseline and differential"/>
</dbReference>
<dbReference type="GO" id="GO:0005634">
    <property type="term" value="C:nucleus"/>
    <property type="evidence" value="ECO:0000314"/>
    <property type="project" value="TAIR"/>
</dbReference>
<dbReference type="GO" id="GO:0003700">
    <property type="term" value="F:DNA-binding transcription factor activity"/>
    <property type="evidence" value="ECO:0000250"/>
    <property type="project" value="TAIR"/>
</dbReference>
<dbReference type="GO" id="GO:0000976">
    <property type="term" value="F:transcription cis-regulatory region binding"/>
    <property type="evidence" value="ECO:0000353"/>
    <property type="project" value="TAIR"/>
</dbReference>
<dbReference type="GO" id="GO:0010158">
    <property type="term" value="P:abaxial cell fate specification"/>
    <property type="evidence" value="ECO:0000315"/>
    <property type="project" value="TAIR"/>
</dbReference>
<dbReference type="GO" id="GO:0009943">
    <property type="term" value="P:adaxial/abaxial axis specification"/>
    <property type="evidence" value="ECO:0000315"/>
    <property type="project" value="TAIR"/>
</dbReference>
<dbReference type="GO" id="GO:0048440">
    <property type="term" value="P:carpel development"/>
    <property type="evidence" value="ECO:0000316"/>
    <property type="project" value="TAIR"/>
</dbReference>
<dbReference type="GO" id="GO:1905392">
    <property type="term" value="P:plant organ morphogenesis"/>
    <property type="evidence" value="ECO:0000315"/>
    <property type="project" value="TAIR"/>
</dbReference>
<dbReference type="GO" id="GO:0048481">
    <property type="term" value="P:plant ovule development"/>
    <property type="evidence" value="ECO:0000316"/>
    <property type="project" value="TAIR"/>
</dbReference>
<dbReference type="GO" id="GO:0009944">
    <property type="term" value="P:polarity specification of adaxial/abaxial axis"/>
    <property type="evidence" value="ECO:0000316"/>
    <property type="project" value="TAIR"/>
</dbReference>
<dbReference type="GO" id="GO:0009956">
    <property type="term" value="P:radial pattern formation"/>
    <property type="evidence" value="ECO:0000315"/>
    <property type="project" value="TAIR"/>
</dbReference>
<dbReference type="GO" id="GO:0010051">
    <property type="term" value="P:xylem and phloem pattern formation"/>
    <property type="evidence" value="ECO:0000315"/>
    <property type="project" value="TAIR"/>
</dbReference>
<dbReference type="FunFam" id="1.10.10.60:FF:000002">
    <property type="entry name" value="Myb family transcription factor"/>
    <property type="match status" value="1"/>
</dbReference>
<dbReference type="Gene3D" id="1.10.10.60">
    <property type="entry name" value="Homeodomain-like"/>
    <property type="match status" value="1"/>
</dbReference>
<dbReference type="InterPro" id="IPR009057">
    <property type="entry name" value="Homeodomain-like_sf"/>
</dbReference>
<dbReference type="InterPro" id="IPR044847">
    <property type="entry name" value="KAN_fam"/>
</dbReference>
<dbReference type="InterPro" id="IPR006447">
    <property type="entry name" value="Myb_dom_plants"/>
</dbReference>
<dbReference type="InterPro" id="IPR001005">
    <property type="entry name" value="SANT/Myb"/>
</dbReference>
<dbReference type="NCBIfam" id="TIGR01557">
    <property type="entry name" value="myb_SHAQKYF"/>
    <property type="match status" value="1"/>
</dbReference>
<dbReference type="PANTHER" id="PTHR31496">
    <property type="entry name" value="TRANSCRIPTION FACTOR KAN2-RELATED"/>
    <property type="match status" value="1"/>
</dbReference>
<dbReference type="PANTHER" id="PTHR31496:SF3">
    <property type="entry name" value="TRANSCRIPTION REPRESSOR KAN1"/>
    <property type="match status" value="1"/>
</dbReference>
<dbReference type="Pfam" id="PF00249">
    <property type="entry name" value="Myb_DNA-binding"/>
    <property type="match status" value="1"/>
</dbReference>
<dbReference type="SUPFAM" id="SSF46689">
    <property type="entry name" value="Homeodomain-like"/>
    <property type="match status" value="1"/>
</dbReference>
<name>KAN1_ARATH</name>
<reference key="1">
    <citation type="journal article" date="2001" name="Nature">
        <title>KANADI regulates organ polarity in Arabidopsis.</title>
        <authorList>
            <person name="Kerstetter R.A."/>
            <person name="Bollman K."/>
            <person name="Taylor R.A."/>
            <person name="Bomblies K."/>
            <person name="Poethig R.S."/>
        </authorList>
    </citation>
    <scope>NUCLEOTIDE SEQUENCE [MRNA]</scope>
    <scope>FUNCTION</scope>
    <scope>DISRUPTION PHENOTYPE</scope>
    <source>
        <strain>cv. Columbia</strain>
    </source>
</reference>
<reference key="2">
    <citation type="journal article" date="2001" name="Curr. Biol.">
        <title>Establishment of polarity in lateral organs of plants.</title>
        <authorList>
            <person name="Eshed Y."/>
            <person name="Baum S.F."/>
            <person name="Perea J.V."/>
            <person name="Bowman J.L."/>
        </authorList>
    </citation>
    <scope>NUCLEOTIDE SEQUENCE [MRNA]</scope>
    <scope>FUNCTION</scope>
    <scope>TISSUE SPECIFICITY</scope>
    <scope>DEVELOPMENTAL STAGE</scope>
    <scope>DISRUPTION PHENOTYPE</scope>
    <source>
        <strain>cv. Columbia</strain>
    </source>
</reference>
<reference key="3">
    <citation type="journal article" date="1997" name="DNA Res.">
        <title>Structural analysis of Arabidopsis thaliana chromosome 5. I. Sequence features of the 1.6 Mb regions covered by twenty physically assigned P1 clones.</title>
        <authorList>
            <person name="Sato S."/>
            <person name="Kotani H."/>
            <person name="Nakamura Y."/>
            <person name="Kaneko T."/>
            <person name="Asamizu E."/>
            <person name="Fukami M."/>
            <person name="Miyajima N."/>
            <person name="Tabata S."/>
        </authorList>
    </citation>
    <scope>NUCLEOTIDE SEQUENCE [LARGE SCALE GENOMIC DNA]</scope>
    <source>
        <strain>cv. Columbia</strain>
    </source>
</reference>
<reference key="4">
    <citation type="journal article" date="2017" name="Plant J.">
        <title>Araport11: a complete reannotation of the Arabidopsis thaliana reference genome.</title>
        <authorList>
            <person name="Cheng C.Y."/>
            <person name="Krishnakumar V."/>
            <person name="Chan A.P."/>
            <person name="Thibaud-Nissen F."/>
            <person name="Schobel S."/>
            <person name="Town C.D."/>
        </authorList>
    </citation>
    <scope>GENOME REANNOTATION</scope>
    <source>
        <strain>cv. Columbia</strain>
    </source>
</reference>
<reference key="5">
    <citation type="submission" date="2006-08" db="EMBL/GenBank/DDBJ databases">
        <title>Arabidopsis ORF Clones.</title>
        <authorList>
            <person name="Quinitio C."/>
            <person name="Chen H."/>
            <person name="Kim C.J."/>
            <person name="Shinn P."/>
            <person name="Ecker J.R."/>
        </authorList>
    </citation>
    <scope>NUCLEOTIDE SEQUENCE [LARGE SCALE MRNA]</scope>
    <source>
        <strain>cv. Columbia</strain>
    </source>
</reference>
<reference key="6">
    <citation type="journal article" date="2003" name="Curr. Biol.">
        <title>Radial patterning of Arabidopsis shoots by class III HD-ZIP and KANADI genes.</title>
        <authorList>
            <person name="Emery J.F."/>
            <person name="Floyd S.K."/>
            <person name="Alvarez J."/>
            <person name="Eshed Y."/>
            <person name="Hawker N.P."/>
            <person name="Izhaki A."/>
            <person name="Baum S.F."/>
            <person name="Bowman J.L."/>
        </authorList>
    </citation>
    <scope>FUNCTION</scope>
    <scope>TISSUE SPECIFICITY</scope>
</reference>
<reference key="7">
    <citation type="journal article" date="2004" name="Plant Physiol.">
        <title>Roles for Class III HD-Zip and KANADI genes in Arabidopsis root development.</title>
        <authorList>
            <person name="Hawker N.P."/>
            <person name="Bowman J.L."/>
        </authorList>
    </citation>
    <scope>FUNCTION</scope>
    <scope>TISSUE SPECIFICITY</scope>
</reference>
<reference key="8">
    <citation type="journal article" date="2006" name="Plant J.">
        <title>ABERRANT TESTA SHAPE encodes a KANADI family member, linking polarity determination to separation and growth of Arabidopsis ovule integuments.</title>
        <authorList>
            <person name="McAbee J.M."/>
            <person name="Hill T.A."/>
            <person name="Skinner D.J."/>
            <person name="Izhaki A."/>
            <person name="Hauser B.A."/>
            <person name="Meister R.J."/>
            <person name="Venugopala Reddy G."/>
            <person name="Meyerowitz E.M."/>
            <person name="Bowman J.L."/>
            <person name="Gasser C.S."/>
        </authorList>
    </citation>
    <scope>FUNCTION</scope>
</reference>
<reference key="9">
    <citation type="journal article" date="2007" name="Plant Cell">
        <title>KANADI and class III HD-Zip gene families regulate embryo patterning and modulate auxin flow during embryogenesis in Arabidopsis.</title>
        <authorList>
            <person name="Izhaki A."/>
            <person name="Bowman J.L."/>
        </authorList>
    </citation>
    <scope>FUNCTION</scope>
</reference>
<reference key="10">
    <citation type="journal article" date="2008" name="Proc. Natl. Acad. Sci. U.S.A.">
        <title>KANADI1 regulates adaxial-abaxial polarity in Arabidopsis by directly repressing the transcription of ASYMMETRIC LEAVES2.</title>
        <authorList>
            <person name="Wu G."/>
            <person name="Lin W.C."/>
            <person name="Huang T."/>
            <person name="Poethig R.S."/>
            <person name="Springer P.S."/>
            <person name="Kerstetter R.A."/>
        </authorList>
    </citation>
    <scope>FUNCTION</scope>
    <scope>INDUCTION</scope>
</reference>
<reference key="11">
    <citation type="journal article" date="2010" name="Development">
        <title>Interplay of auxin, KANADI and Class III HD-ZIP transcription factors in vascular tissue formation.</title>
        <authorList>
            <person name="Ilegems M."/>
            <person name="Douet V."/>
            <person name="Meylan-Bettex M."/>
            <person name="Uyttewaal M."/>
            <person name="Brand L."/>
            <person name="Bowman J.L."/>
            <person name="Stieger P.A."/>
        </authorList>
    </citation>
    <scope>FUNCTION</scope>
</reference>
<sequence>MSMEGVFLEKTKTNTTTTLPDLSLHISLPDIHQYHHNESSKESSRRSSQLENNNRSSNFELSLSHHNHPTARIFHCPDRRTLNLPHQQHYNNPIINGVHQRVDESEISNLHRPIRGIPVYHNRSFPFHQQNSSLPSLGGGDMDQISILNSSSGYNNAYRSLQSSPRLKGVPLHHHHHHNQYGVVGSSDSSSPHHHNHHHHGMIRSRFLPKMPTKRSMRAPRMRWTSSLHARFVHAVELLGGHERATPKSVLELMDVKDLTLAHVKSHLQMYRTVKTTNKPAASSDGSGEEEMGINGNEVHHQSSTDQRAQSDDTSLHQETDISSTQPRWSNSSRETWPLSNNCSSDIDTMIRTSSTSMISHYQRSSIQNQEQRSNDQAKRCGNLSCENPSLEFTLGRPDWHEK</sequence>
<feature type="chain" id="PRO_0000408380" description="Transcription repressor KAN1">
    <location>
        <begin position="1"/>
        <end position="403"/>
    </location>
</feature>
<feature type="domain" description="HTH myb-type">
    <location>
        <begin position="216"/>
        <end position="276"/>
    </location>
</feature>
<feature type="DNA-binding region" description="H-T-H motif" evidence="1">
    <location>
        <begin position="247"/>
        <end position="272"/>
    </location>
</feature>
<feature type="region of interest" description="Disordered" evidence="2">
    <location>
        <begin position="35"/>
        <end position="54"/>
    </location>
</feature>
<feature type="region of interest" description="Disordered" evidence="2">
    <location>
        <begin position="273"/>
        <end position="345"/>
    </location>
</feature>
<feature type="region of interest" description="Disordered" evidence="2">
    <location>
        <begin position="357"/>
        <end position="403"/>
    </location>
</feature>
<feature type="compositionally biased region" description="Basic and acidic residues" evidence="2">
    <location>
        <begin position="35"/>
        <end position="45"/>
    </location>
</feature>
<feature type="compositionally biased region" description="Polar residues" evidence="2">
    <location>
        <begin position="274"/>
        <end position="286"/>
    </location>
</feature>
<feature type="compositionally biased region" description="Basic and acidic residues" evidence="2">
    <location>
        <begin position="298"/>
        <end position="320"/>
    </location>
</feature>
<feature type="compositionally biased region" description="Polar residues" evidence="2">
    <location>
        <begin position="321"/>
        <end position="343"/>
    </location>
</feature>
<feature type="compositionally biased region" description="Polar residues" evidence="2">
    <location>
        <begin position="362"/>
        <end position="372"/>
    </location>
</feature>
<organism>
    <name type="scientific">Arabidopsis thaliana</name>
    <name type="common">Mouse-ear cress</name>
    <dbReference type="NCBI Taxonomy" id="3702"/>
    <lineage>
        <taxon>Eukaryota</taxon>
        <taxon>Viridiplantae</taxon>
        <taxon>Streptophyta</taxon>
        <taxon>Embryophyta</taxon>
        <taxon>Tracheophyta</taxon>
        <taxon>Spermatophyta</taxon>
        <taxon>Magnoliopsida</taxon>
        <taxon>eudicotyledons</taxon>
        <taxon>Gunneridae</taxon>
        <taxon>Pentapetalae</taxon>
        <taxon>rosids</taxon>
        <taxon>malvids</taxon>
        <taxon>Brassicales</taxon>
        <taxon>Brassicaceae</taxon>
        <taxon>Camelineae</taxon>
        <taxon>Arabidopsis</taxon>
    </lineage>
</organism>
<comment type="function">
    <text evidence="3 4 5 6 7 8 9 10">Transcriptional repressor that regulates lateral organ polarity. Promotes lateral organ abaxial identity by repressing the adaxial regulator ASYMMETRIC LEAVES2 (AS2) in abaxial cells. Required for abaxial identity in both leaves and carpels. Functions with KAN2 in the specification of polarity of the ovule outer integument. Regulates cambium activity by repressing the auxin efflux carrier PIN1. Plays a role in lateral root formation and development.</text>
</comment>
<comment type="interaction">
    <interactant intactId="EBI-4426504">
        <id>Q93WJ9</id>
    </interactant>
    <interactant intactId="EBI-4429105">
        <id>Q9FNR3</id>
        <label>EXO70E2</label>
    </interactant>
    <organismsDiffer>false</organismsDiffer>
    <experiments>2</experiments>
</comment>
<comment type="interaction">
    <interactant intactId="EBI-4426504">
        <id>Q93WJ9</id>
    </interactant>
    <interactant intactId="EBI-963606">
        <id>Q9LQT8</id>
        <label>GAI</label>
    </interactant>
    <organismsDiffer>false</organismsDiffer>
    <experiments>3</experiments>
</comment>
<comment type="interaction">
    <interactant intactId="EBI-4426504">
        <id>Q93WJ9</id>
    </interactant>
    <interactant intactId="EBI-963624">
        <id>Q9SLH3</id>
        <label>RGA</label>
    </interactant>
    <organismsDiffer>false</organismsDiffer>
    <experiments>3</experiments>
</comment>
<comment type="interaction">
    <interactant intactId="EBI-4426504">
        <id>Q93WJ9</id>
    </interactant>
    <interactant intactId="EBI-963665">
        <id>Q8GXW1</id>
        <label>RGL2</label>
    </interactant>
    <organismsDiffer>false</organismsDiffer>
    <experiments>3</experiments>
</comment>
<comment type="interaction">
    <interactant intactId="EBI-4426504">
        <id>Q93WJ9</id>
    </interactant>
    <interactant intactId="EBI-15681313">
        <id>Q9LF53</id>
        <label>RGL3</label>
    </interactant>
    <organismsDiffer>false</organismsDiffer>
    <experiments>3</experiments>
</comment>
<comment type="interaction">
    <interactant intactId="EBI-4426504">
        <id>Q93WJ9</id>
    </interactant>
    <interactant intactId="EBI-1113627">
        <id>O22152</id>
        <label>YAB1</label>
    </interactant>
    <organismsDiffer>false</organismsDiffer>
    <experiments>3</experiments>
</comment>
<comment type="interaction">
    <interactant intactId="EBI-4426504">
        <id>Q93WJ9</id>
    </interactant>
    <interactant intactId="EBI-1115657">
        <id>Q9XFB1</id>
        <label>YAB3</label>
    </interactant>
    <organismsDiffer>false</organismsDiffer>
    <experiments>3</experiments>
</comment>
<comment type="subcellular location">
    <subcellularLocation>
        <location>Nucleus</location>
    </subcellularLocation>
</comment>
<comment type="tissue specificity">
    <text evidence="4 5 6">Expressed in developing phloem and lateral root.</text>
</comment>
<comment type="developmental stage">
    <text evidence="4">In globular embryos, expressed in the peripheral cells in a basal region above the hypophysis. In heart-stage embryos, expressed in the periphery of the presumptive hypocotyl and on the abaxial side of cotyledon primordia. During vegetative growth, expressed the abaxial side of very young leaf primordia. Expressed on the abaxial side of carpel primordia and then in a localized region on the abaxial margin that gives rise to the septum. Later, expressed in the tissue that gives rise to ovules.</text>
</comment>
<comment type="induction">
    <text evidence="9">Repressed by AS2 in adaxial tissue.</text>
</comment>
<comment type="disruption phenotype">
    <text evidence="3 4">Flat leaves. Altered morphology of abaxial mesophyll cells. Decreased number of trichomes on the adaxial surface and increased number of abaxial trichomes.</text>
</comment>
<comment type="miscellaneous">
    <text>Plants overexpressing KAN1 develop elongated and pointed cotyledons and do not produced subsequent leaves, resulting in seedling lethality.</text>
</comment>
<comment type="sequence caution" evidence="11">
    <conflict type="erroneous gene model prediction">
        <sequence resource="EMBL-CDS" id="BAB09625"/>
    </conflict>
</comment>